<accession>B7M596</accession>
<evidence type="ECO:0000255" key="1">
    <source>
        <dbReference type="HAMAP-Rule" id="MF_00074"/>
    </source>
</evidence>
<sequence length="207" mass="23431">MLNKLSLLLKDAGISLTDHQKNQLIAYVNMLHKWNKAYNLTSVRDPNEMLVRHILDSIVVAPYLQGERFIDVGTGPGLPGIPLSIVRPEAHFTLLDSLGKRVRFLRQVQHELKLENIEPVQSRVEEFPSEPPFDGVISRAFASLNDMVSWCHHLPGEQGRFYALKGQMPEDEIALLPEEYQVESVVKLQVPALDGERHLVVIKANKI</sequence>
<gene>
    <name evidence="1" type="primary">rsmG</name>
    <name type="ordered locus">ECIAI1_3924</name>
</gene>
<proteinExistence type="inferred from homology"/>
<feature type="chain" id="PRO_1000117068" description="Ribosomal RNA small subunit methyltransferase G">
    <location>
        <begin position="1"/>
        <end position="207"/>
    </location>
</feature>
<feature type="binding site" evidence="1">
    <location>
        <position position="73"/>
    </location>
    <ligand>
        <name>S-adenosyl-L-methionine</name>
        <dbReference type="ChEBI" id="CHEBI:59789"/>
    </ligand>
</feature>
<feature type="binding site" evidence="1">
    <location>
        <position position="78"/>
    </location>
    <ligand>
        <name>S-adenosyl-L-methionine</name>
        <dbReference type="ChEBI" id="CHEBI:59789"/>
    </ligand>
</feature>
<feature type="binding site" evidence="1">
    <location>
        <begin position="124"/>
        <end position="125"/>
    </location>
    <ligand>
        <name>S-adenosyl-L-methionine</name>
        <dbReference type="ChEBI" id="CHEBI:59789"/>
    </ligand>
</feature>
<feature type="binding site" evidence="1">
    <location>
        <position position="139"/>
    </location>
    <ligand>
        <name>S-adenosyl-L-methionine</name>
        <dbReference type="ChEBI" id="CHEBI:59789"/>
    </ligand>
</feature>
<protein>
    <recommendedName>
        <fullName evidence="1">Ribosomal RNA small subunit methyltransferase G</fullName>
        <ecNumber evidence="1">2.1.1.170</ecNumber>
    </recommendedName>
    <alternativeName>
        <fullName evidence="1">16S rRNA 7-methylguanosine methyltransferase</fullName>
        <shortName evidence="1">16S rRNA m7G methyltransferase</shortName>
    </alternativeName>
</protein>
<organism>
    <name type="scientific">Escherichia coli O8 (strain IAI1)</name>
    <dbReference type="NCBI Taxonomy" id="585034"/>
    <lineage>
        <taxon>Bacteria</taxon>
        <taxon>Pseudomonadati</taxon>
        <taxon>Pseudomonadota</taxon>
        <taxon>Gammaproteobacteria</taxon>
        <taxon>Enterobacterales</taxon>
        <taxon>Enterobacteriaceae</taxon>
        <taxon>Escherichia</taxon>
    </lineage>
</organism>
<dbReference type="EC" id="2.1.1.170" evidence="1"/>
<dbReference type="EMBL" id="CU928160">
    <property type="protein sequence ID" value="CAR00718.1"/>
    <property type="molecule type" value="Genomic_DNA"/>
</dbReference>
<dbReference type="RefSeq" id="WP_000932839.1">
    <property type="nucleotide sequence ID" value="NC_011741.1"/>
</dbReference>
<dbReference type="SMR" id="B7M596"/>
<dbReference type="GeneID" id="93778227"/>
<dbReference type="KEGG" id="ecr:ECIAI1_3924"/>
<dbReference type="HOGENOM" id="CLU_065341_2_2_6"/>
<dbReference type="GO" id="GO:0005829">
    <property type="term" value="C:cytosol"/>
    <property type="evidence" value="ECO:0007669"/>
    <property type="project" value="TreeGrafter"/>
</dbReference>
<dbReference type="GO" id="GO:0070043">
    <property type="term" value="F:rRNA (guanine-N7-)-methyltransferase activity"/>
    <property type="evidence" value="ECO:0007669"/>
    <property type="project" value="UniProtKB-UniRule"/>
</dbReference>
<dbReference type="CDD" id="cd02440">
    <property type="entry name" value="AdoMet_MTases"/>
    <property type="match status" value="1"/>
</dbReference>
<dbReference type="FunFam" id="3.40.50.150:FF:000032">
    <property type="entry name" value="Ribosomal RNA small subunit methyltransferase G"/>
    <property type="match status" value="1"/>
</dbReference>
<dbReference type="Gene3D" id="3.40.50.150">
    <property type="entry name" value="Vaccinia Virus protein VP39"/>
    <property type="match status" value="1"/>
</dbReference>
<dbReference type="HAMAP" id="MF_00074">
    <property type="entry name" value="16SrRNA_methyltr_G"/>
    <property type="match status" value="1"/>
</dbReference>
<dbReference type="InterPro" id="IPR003682">
    <property type="entry name" value="rRNA_ssu_MeTfrase_G"/>
</dbReference>
<dbReference type="InterPro" id="IPR029063">
    <property type="entry name" value="SAM-dependent_MTases_sf"/>
</dbReference>
<dbReference type="NCBIfam" id="TIGR00138">
    <property type="entry name" value="rsmG_gidB"/>
    <property type="match status" value="1"/>
</dbReference>
<dbReference type="PANTHER" id="PTHR31760">
    <property type="entry name" value="S-ADENOSYL-L-METHIONINE-DEPENDENT METHYLTRANSFERASES SUPERFAMILY PROTEIN"/>
    <property type="match status" value="1"/>
</dbReference>
<dbReference type="PANTHER" id="PTHR31760:SF0">
    <property type="entry name" value="S-ADENOSYL-L-METHIONINE-DEPENDENT METHYLTRANSFERASES SUPERFAMILY PROTEIN"/>
    <property type="match status" value="1"/>
</dbReference>
<dbReference type="Pfam" id="PF02527">
    <property type="entry name" value="GidB"/>
    <property type="match status" value="1"/>
</dbReference>
<dbReference type="PIRSF" id="PIRSF003078">
    <property type="entry name" value="GidB"/>
    <property type="match status" value="1"/>
</dbReference>
<dbReference type="SUPFAM" id="SSF53335">
    <property type="entry name" value="S-adenosyl-L-methionine-dependent methyltransferases"/>
    <property type="match status" value="1"/>
</dbReference>
<keyword id="KW-0963">Cytoplasm</keyword>
<keyword id="KW-0489">Methyltransferase</keyword>
<keyword id="KW-0698">rRNA processing</keyword>
<keyword id="KW-0949">S-adenosyl-L-methionine</keyword>
<keyword id="KW-0808">Transferase</keyword>
<name>RSMG_ECO8A</name>
<comment type="function">
    <text evidence="1">Specifically methylates the N7 position of guanine in position 527 of 16S rRNA.</text>
</comment>
<comment type="catalytic activity">
    <reaction evidence="1">
        <text>guanosine(527) in 16S rRNA + S-adenosyl-L-methionine = N(7)-methylguanosine(527) in 16S rRNA + S-adenosyl-L-homocysteine</text>
        <dbReference type="Rhea" id="RHEA:42732"/>
        <dbReference type="Rhea" id="RHEA-COMP:10209"/>
        <dbReference type="Rhea" id="RHEA-COMP:10210"/>
        <dbReference type="ChEBI" id="CHEBI:57856"/>
        <dbReference type="ChEBI" id="CHEBI:59789"/>
        <dbReference type="ChEBI" id="CHEBI:74269"/>
        <dbReference type="ChEBI" id="CHEBI:74480"/>
        <dbReference type="EC" id="2.1.1.170"/>
    </reaction>
</comment>
<comment type="subcellular location">
    <subcellularLocation>
        <location evidence="1">Cytoplasm</location>
    </subcellularLocation>
</comment>
<comment type="similarity">
    <text evidence="1">Belongs to the methyltransferase superfamily. RNA methyltransferase RsmG family.</text>
</comment>
<reference key="1">
    <citation type="journal article" date="2009" name="PLoS Genet.">
        <title>Organised genome dynamics in the Escherichia coli species results in highly diverse adaptive paths.</title>
        <authorList>
            <person name="Touchon M."/>
            <person name="Hoede C."/>
            <person name="Tenaillon O."/>
            <person name="Barbe V."/>
            <person name="Baeriswyl S."/>
            <person name="Bidet P."/>
            <person name="Bingen E."/>
            <person name="Bonacorsi S."/>
            <person name="Bouchier C."/>
            <person name="Bouvet O."/>
            <person name="Calteau A."/>
            <person name="Chiapello H."/>
            <person name="Clermont O."/>
            <person name="Cruveiller S."/>
            <person name="Danchin A."/>
            <person name="Diard M."/>
            <person name="Dossat C."/>
            <person name="Karoui M.E."/>
            <person name="Frapy E."/>
            <person name="Garry L."/>
            <person name="Ghigo J.M."/>
            <person name="Gilles A.M."/>
            <person name="Johnson J."/>
            <person name="Le Bouguenec C."/>
            <person name="Lescat M."/>
            <person name="Mangenot S."/>
            <person name="Martinez-Jehanne V."/>
            <person name="Matic I."/>
            <person name="Nassif X."/>
            <person name="Oztas S."/>
            <person name="Petit M.A."/>
            <person name="Pichon C."/>
            <person name="Rouy Z."/>
            <person name="Ruf C.S."/>
            <person name="Schneider D."/>
            <person name="Tourret J."/>
            <person name="Vacherie B."/>
            <person name="Vallenet D."/>
            <person name="Medigue C."/>
            <person name="Rocha E.P.C."/>
            <person name="Denamur E."/>
        </authorList>
    </citation>
    <scope>NUCLEOTIDE SEQUENCE [LARGE SCALE GENOMIC DNA]</scope>
    <source>
        <strain>IAI1</strain>
    </source>
</reference>